<name>MSCL_SERP5</name>
<evidence type="ECO:0000255" key="1">
    <source>
        <dbReference type="HAMAP-Rule" id="MF_00115"/>
    </source>
</evidence>
<dbReference type="EMBL" id="CP000826">
    <property type="protein sequence ID" value="ABV43609.1"/>
    <property type="molecule type" value="Genomic_DNA"/>
</dbReference>
<dbReference type="SMR" id="A8GKG9"/>
<dbReference type="STRING" id="399741.Spro_4515"/>
<dbReference type="KEGG" id="spe:Spro_4515"/>
<dbReference type="eggNOG" id="COG1970">
    <property type="taxonomic scope" value="Bacteria"/>
</dbReference>
<dbReference type="HOGENOM" id="CLU_095787_0_0_6"/>
<dbReference type="OrthoDB" id="9810350at2"/>
<dbReference type="GO" id="GO:0005886">
    <property type="term" value="C:plasma membrane"/>
    <property type="evidence" value="ECO:0007669"/>
    <property type="project" value="UniProtKB-SubCell"/>
</dbReference>
<dbReference type="GO" id="GO:0008381">
    <property type="term" value="F:mechanosensitive monoatomic ion channel activity"/>
    <property type="evidence" value="ECO:0007669"/>
    <property type="project" value="UniProtKB-UniRule"/>
</dbReference>
<dbReference type="FunFam" id="1.10.1200.120:FF:000001">
    <property type="entry name" value="Large-conductance mechanosensitive channel"/>
    <property type="match status" value="1"/>
</dbReference>
<dbReference type="Gene3D" id="1.10.1200.120">
    <property type="entry name" value="Large-conductance mechanosensitive channel, MscL, domain 1"/>
    <property type="match status" value="1"/>
</dbReference>
<dbReference type="HAMAP" id="MF_00115">
    <property type="entry name" value="MscL"/>
    <property type="match status" value="1"/>
</dbReference>
<dbReference type="InterPro" id="IPR019823">
    <property type="entry name" value="Mechanosensitive_channel_CS"/>
</dbReference>
<dbReference type="InterPro" id="IPR001185">
    <property type="entry name" value="MS_channel"/>
</dbReference>
<dbReference type="InterPro" id="IPR037673">
    <property type="entry name" value="MSC/AndL"/>
</dbReference>
<dbReference type="InterPro" id="IPR036019">
    <property type="entry name" value="MscL_channel"/>
</dbReference>
<dbReference type="NCBIfam" id="TIGR00220">
    <property type="entry name" value="mscL"/>
    <property type="match status" value="1"/>
</dbReference>
<dbReference type="NCBIfam" id="NF001841">
    <property type="entry name" value="PRK00567.1-1"/>
    <property type="match status" value="1"/>
</dbReference>
<dbReference type="NCBIfam" id="NF001843">
    <property type="entry name" value="PRK00567.1-4"/>
    <property type="match status" value="1"/>
</dbReference>
<dbReference type="NCBIfam" id="NF010557">
    <property type="entry name" value="PRK13952.1"/>
    <property type="match status" value="1"/>
</dbReference>
<dbReference type="PANTHER" id="PTHR30266:SF2">
    <property type="entry name" value="LARGE-CONDUCTANCE MECHANOSENSITIVE CHANNEL"/>
    <property type="match status" value="1"/>
</dbReference>
<dbReference type="PANTHER" id="PTHR30266">
    <property type="entry name" value="MECHANOSENSITIVE CHANNEL MSCL"/>
    <property type="match status" value="1"/>
</dbReference>
<dbReference type="Pfam" id="PF01741">
    <property type="entry name" value="MscL"/>
    <property type="match status" value="1"/>
</dbReference>
<dbReference type="PRINTS" id="PR01264">
    <property type="entry name" value="MECHCHANNEL"/>
</dbReference>
<dbReference type="SUPFAM" id="SSF81330">
    <property type="entry name" value="Gated mechanosensitive channel"/>
    <property type="match status" value="1"/>
</dbReference>
<dbReference type="PROSITE" id="PS01327">
    <property type="entry name" value="MSCL"/>
    <property type="match status" value="1"/>
</dbReference>
<keyword id="KW-0997">Cell inner membrane</keyword>
<keyword id="KW-1003">Cell membrane</keyword>
<keyword id="KW-0407">Ion channel</keyword>
<keyword id="KW-0406">Ion transport</keyword>
<keyword id="KW-0472">Membrane</keyword>
<keyword id="KW-0812">Transmembrane</keyword>
<keyword id="KW-1133">Transmembrane helix</keyword>
<keyword id="KW-0813">Transport</keyword>
<feature type="chain" id="PRO_1000057760" description="Large-conductance mechanosensitive channel">
    <location>
        <begin position="1"/>
        <end position="138"/>
    </location>
</feature>
<feature type="transmembrane region" description="Helical" evidence="1">
    <location>
        <begin position="10"/>
        <end position="30"/>
    </location>
</feature>
<feature type="transmembrane region" description="Helical" evidence="1">
    <location>
        <begin position="76"/>
        <end position="96"/>
    </location>
</feature>
<sequence>MSMMKEFREFAMRGNVVDLAVGVIIGAAFGKIVSSFVADIIMPPLGLLIGGVDFKQFHLVLREAQGAVPAVVMNYGSFIQTIFDFVIVAFAIFLAIKLMNKVRRKQEEAPAAPPAPTAEEKLLTEIRDLLSQQQQPKL</sequence>
<accession>A8GKG9</accession>
<organism>
    <name type="scientific">Serratia proteamaculans (strain 568)</name>
    <dbReference type="NCBI Taxonomy" id="399741"/>
    <lineage>
        <taxon>Bacteria</taxon>
        <taxon>Pseudomonadati</taxon>
        <taxon>Pseudomonadota</taxon>
        <taxon>Gammaproteobacteria</taxon>
        <taxon>Enterobacterales</taxon>
        <taxon>Yersiniaceae</taxon>
        <taxon>Serratia</taxon>
    </lineage>
</organism>
<reference key="1">
    <citation type="submission" date="2007-09" db="EMBL/GenBank/DDBJ databases">
        <title>Complete sequence of chromosome of Serratia proteamaculans 568.</title>
        <authorList>
            <consortium name="US DOE Joint Genome Institute"/>
            <person name="Copeland A."/>
            <person name="Lucas S."/>
            <person name="Lapidus A."/>
            <person name="Barry K."/>
            <person name="Glavina del Rio T."/>
            <person name="Dalin E."/>
            <person name="Tice H."/>
            <person name="Pitluck S."/>
            <person name="Chain P."/>
            <person name="Malfatti S."/>
            <person name="Shin M."/>
            <person name="Vergez L."/>
            <person name="Schmutz J."/>
            <person name="Larimer F."/>
            <person name="Land M."/>
            <person name="Hauser L."/>
            <person name="Kyrpides N."/>
            <person name="Kim E."/>
            <person name="Taghavi S."/>
            <person name="Newman L."/>
            <person name="Vangronsveld J."/>
            <person name="van der Lelie D."/>
            <person name="Richardson P."/>
        </authorList>
    </citation>
    <scope>NUCLEOTIDE SEQUENCE [LARGE SCALE GENOMIC DNA]</scope>
    <source>
        <strain>568</strain>
    </source>
</reference>
<gene>
    <name evidence="1" type="primary">mscL</name>
    <name type="ordered locus">Spro_4515</name>
</gene>
<protein>
    <recommendedName>
        <fullName evidence="1">Large-conductance mechanosensitive channel</fullName>
    </recommendedName>
</protein>
<comment type="function">
    <text evidence="1">Channel that opens in response to stretch forces in the membrane lipid bilayer. May participate in the regulation of osmotic pressure changes within the cell.</text>
</comment>
<comment type="subunit">
    <text evidence="1">Homopentamer.</text>
</comment>
<comment type="subcellular location">
    <subcellularLocation>
        <location evidence="1">Cell inner membrane</location>
        <topology evidence="1">Multi-pass membrane protein</topology>
    </subcellularLocation>
</comment>
<comment type="similarity">
    <text evidence="1">Belongs to the MscL family.</text>
</comment>
<proteinExistence type="inferred from homology"/>